<feature type="signal peptide" evidence="2">
    <location>
        <begin position="1"/>
        <end position="16"/>
    </location>
</feature>
<feature type="propeptide" id="PRO_0000033672" evidence="2">
    <location>
        <begin position="17"/>
        <end position="277"/>
    </location>
</feature>
<feature type="chain" id="PRO_0000033673" description="Protein screw">
    <location>
        <begin position="278"/>
        <end position="400"/>
    </location>
</feature>
<feature type="glycosylation site" description="N-linked (GlcNAc...) asparagine" evidence="2">
    <location>
        <position position="165"/>
    </location>
</feature>
<feature type="glycosylation site" description="N-linked (GlcNAc...) asparagine" evidence="2">
    <location>
        <position position="189"/>
    </location>
</feature>
<feature type="glycosylation site" description="N-linked (GlcNAc...) asparagine" evidence="2">
    <location>
        <position position="201"/>
    </location>
</feature>
<feature type="glycosylation site" description="N-linked (GlcNAc...) asparagine" evidence="2">
    <location>
        <position position="304"/>
    </location>
</feature>
<feature type="glycosylation site" description="N-linked (GlcNAc...) asparagine" evidence="2">
    <location>
        <position position="342"/>
    </location>
</feature>
<feature type="disulfide bond" evidence="1">
    <location>
        <begin position="300"/>
        <end position="365"/>
    </location>
</feature>
<feature type="disulfide bond" evidence="1">
    <location>
        <begin position="329"/>
        <end position="397"/>
    </location>
</feature>
<feature type="disulfide bond" evidence="1">
    <location>
        <begin position="333"/>
        <end position="399"/>
    </location>
</feature>
<feature type="disulfide bond" description="Interchain" evidence="1">
    <location>
        <position position="364"/>
    </location>
</feature>
<feature type="sequence conflict" description="In Ref. 1; AAA56872." evidence="4" ref="1">
    <original>F</original>
    <variation>L</variation>
    <location>
        <position position="6"/>
    </location>
</feature>
<gene>
    <name type="primary">scw</name>
    <name type="ORF">CG31695</name>
</gene>
<comment type="function">
    <text evidence="3">Part of the signal that specifies dorsal cell fates in the embryo. Acts together with dpp.</text>
</comment>
<comment type="subunit">
    <text>Heterodimers of scw/dpp are the active subunit, dpp/dpp homodimers elicit a basal response and scw/scw homodimers alone are ineffective in specifying a dorsal pattern.</text>
</comment>
<comment type="subcellular location">
    <subcellularLocation>
        <location>Secreted</location>
    </subcellularLocation>
</comment>
<comment type="tissue specificity">
    <text evidence="3">Ubiquitously expressed during early stages of embryogenesis, but the effect on development appears graded and is restricted to the dorsal side of the embryo.</text>
</comment>
<comment type="developmental stage">
    <text evidence="3">Expressed both maternally and zygotically. Highest embryonic expression is found during syncytial blastoderm (nuclear cycles 11-12). Expression declines rapidly at cellular blastoderm stage 5 and is not detected during the rest of embryonic development.</text>
</comment>
<comment type="similarity">
    <text evidence="4">Belongs to the TGF-beta family.</text>
</comment>
<sequence length="400" mass="45891">MLNVFFLTSLFYAASATTYVTTNNHIEMPIYQKRPLSEQMEMIDILDLGDRPRRQAEPNLHNSASKFLLEVYNEISEDQEPKEVLHQRHKRSLDDDILISNEDRQEIASCNSILTFSSRLKPEQLDNELDMHITFNTNDVPVDLSLVQAMLRIYKQPSLVDRRANFTVSVYRKLDNRQDFSYRILGSVNTTSSQRGWLEFNLTDTLRYWLHNKGLQRRNELRISIGDSQLSTFAAGLVTPQASRTSLEPFIVGYFNGPELLVKIQKLRFKRDLEKRRAGGGSPPPPPPPPVDLYRPPQSCERLNFTVDFKELHMHNWVIAPKKFEAYFCGGGCNFPLGTKMNATNHAIVQTLMHLKQPHLPKPCCVPTVLGAITILRYLNEDIIDLTKYQKAVAKECGCH</sequence>
<dbReference type="EMBL" id="U17573">
    <property type="protein sequence ID" value="AAA56872.1"/>
    <property type="molecule type" value="mRNA"/>
</dbReference>
<dbReference type="EMBL" id="AE014134">
    <property type="protein sequence ID" value="AAN11056.2"/>
    <property type="molecule type" value="Genomic_DNA"/>
</dbReference>
<dbReference type="EMBL" id="AY051793">
    <property type="protein sequence ID" value="AAK93217.1"/>
    <property type="molecule type" value="mRNA"/>
</dbReference>
<dbReference type="RefSeq" id="NP_001286088.1">
    <property type="nucleotide sequence ID" value="NM_001299159.1"/>
</dbReference>
<dbReference type="RefSeq" id="NP_524863.3">
    <property type="nucleotide sequence ID" value="NM_080124.5"/>
</dbReference>
<dbReference type="BioGRID" id="70052">
    <property type="interactions" value="7"/>
</dbReference>
<dbReference type="DIP" id="DIP-59820N"/>
<dbReference type="FunCoup" id="P54631">
    <property type="interactions" value="3"/>
</dbReference>
<dbReference type="IntAct" id="P54631">
    <property type="interactions" value="2"/>
</dbReference>
<dbReference type="STRING" id="7227.FBpp0310402"/>
<dbReference type="GlyCosmos" id="P54631">
    <property type="glycosylation" value="5 sites, No reported glycans"/>
</dbReference>
<dbReference type="GlyGen" id="P54631">
    <property type="glycosylation" value="5 sites"/>
</dbReference>
<dbReference type="PaxDb" id="7227-FBpp0080802"/>
<dbReference type="DNASU" id="46000"/>
<dbReference type="EnsemblMetazoa" id="FBtr0081261">
    <property type="protein sequence ID" value="FBpp0080802"/>
    <property type="gene ID" value="FBgn0005590"/>
</dbReference>
<dbReference type="EnsemblMetazoa" id="FBtr0343860">
    <property type="protein sequence ID" value="FBpp0310402"/>
    <property type="gene ID" value="FBgn0005590"/>
</dbReference>
<dbReference type="GeneID" id="46000"/>
<dbReference type="KEGG" id="dme:Dmel_CG31695"/>
<dbReference type="UCSC" id="CG31695-RA">
    <property type="organism name" value="d. melanogaster"/>
</dbReference>
<dbReference type="AGR" id="FB:FBgn0005590"/>
<dbReference type="CTD" id="46000"/>
<dbReference type="FlyBase" id="FBgn0005590">
    <property type="gene designation" value="scw"/>
</dbReference>
<dbReference type="VEuPathDB" id="VectorBase:FBgn0005590"/>
<dbReference type="eggNOG" id="KOG3900">
    <property type="taxonomic scope" value="Eukaryota"/>
</dbReference>
<dbReference type="HOGENOM" id="CLU_020515_4_1_1"/>
<dbReference type="InParanoid" id="P54631"/>
<dbReference type="OMA" id="KPPQSCE"/>
<dbReference type="OrthoDB" id="5987191at2759"/>
<dbReference type="PhylomeDB" id="P54631"/>
<dbReference type="SignaLink" id="P54631"/>
<dbReference type="BioGRID-ORCS" id="46000">
    <property type="hits" value="0 hits in 3 CRISPR screens"/>
</dbReference>
<dbReference type="GenomeRNAi" id="46000"/>
<dbReference type="PRO" id="PR:P54631"/>
<dbReference type="Proteomes" id="UP000000803">
    <property type="component" value="Chromosome 2L"/>
</dbReference>
<dbReference type="Bgee" id="FBgn0005590">
    <property type="expression patterns" value="Expressed in cleaving embryo and 13 other cell types or tissues"/>
</dbReference>
<dbReference type="ExpressionAtlas" id="P54631">
    <property type="expression patterns" value="baseline and differential"/>
</dbReference>
<dbReference type="GO" id="GO:0005615">
    <property type="term" value="C:extracellular space"/>
    <property type="evidence" value="ECO:0000314"/>
    <property type="project" value="FlyBase"/>
</dbReference>
<dbReference type="GO" id="GO:0005125">
    <property type="term" value="F:cytokine activity"/>
    <property type="evidence" value="ECO:0000318"/>
    <property type="project" value="GO_Central"/>
</dbReference>
<dbReference type="GO" id="GO:0008083">
    <property type="term" value="F:growth factor activity"/>
    <property type="evidence" value="ECO:0007669"/>
    <property type="project" value="UniProtKB-KW"/>
</dbReference>
<dbReference type="GO" id="GO:0046982">
    <property type="term" value="F:protein heterodimerization activity"/>
    <property type="evidence" value="ECO:0000353"/>
    <property type="project" value="UniProtKB"/>
</dbReference>
<dbReference type="GO" id="GO:0048018">
    <property type="term" value="F:receptor ligand activity"/>
    <property type="evidence" value="ECO:0000314"/>
    <property type="project" value="FlyBase"/>
</dbReference>
<dbReference type="GO" id="GO:0007378">
    <property type="term" value="P:amnioserosa formation"/>
    <property type="evidence" value="ECO:0000315"/>
    <property type="project" value="FlyBase"/>
</dbReference>
<dbReference type="GO" id="GO:0030509">
    <property type="term" value="P:BMP signaling pathway"/>
    <property type="evidence" value="ECO:0000314"/>
    <property type="project" value="FlyBase"/>
</dbReference>
<dbReference type="GO" id="GO:0030154">
    <property type="term" value="P:cell differentiation"/>
    <property type="evidence" value="ECO:0007669"/>
    <property type="project" value="UniProtKB-KW"/>
</dbReference>
<dbReference type="GO" id="GO:0007502">
    <property type="term" value="P:digestive tract mesoderm development"/>
    <property type="evidence" value="ECO:0000315"/>
    <property type="project" value="FlyBase"/>
</dbReference>
<dbReference type="GO" id="GO:0009953">
    <property type="term" value="P:dorsal/ventral pattern formation"/>
    <property type="evidence" value="ECO:0000315"/>
    <property type="project" value="FlyBase"/>
</dbReference>
<dbReference type="GO" id="GO:0008406">
    <property type="term" value="P:gonad development"/>
    <property type="evidence" value="ECO:0000315"/>
    <property type="project" value="FlyBase"/>
</dbReference>
<dbReference type="GO" id="GO:0007476">
    <property type="term" value="P:imaginal disc-derived wing morphogenesis"/>
    <property type="evidence" value="ECO:0000315"/>
    <property type="project" value="FlyBase"/>
</dbReference>
<dbReference type="CDD" id="cd13761">
    <property type="entry name" value="TGF_beta_BMP5_like"/>
    <property type="match status" value="1"/>
</dbReference>
<dbReference type="FunFam" id="2.10.90.10:FF:000052">
    <property type="entry name" value="Bone morphogenetic protein"/>
    <property type="match status" value="1"/>
</dbReference>
<dbReference type="FunFam" id="2.60.120.970:FF:000039">
    <property type="entry name" value="Protein screw"/>
    <property type="match status" value="1"/>
</dbReference>
<dbReference type="Gene3D" id="2.60.120.970">
    <property type="match status" value="1"/>
</dbReference>
<dbReference type="Gene3D" id="2.10.90.10">
    <property type="entry name" value="Cystine-knot cytokines"/>
    <property type="match status" value="1"/>
</dbReference>
<dbReference type="InterPro" id="IPR029034">
    <property type="entry name" value="Cystine-knot_cytokine"/>
</dbReference>
<dbReference type="InterPro" id="IPR001839">
    <property type="entry name" value="TGF-b_C"/>
</dbReference>
<dbReference type="InterPro" id="IPR001111">
    <property type="entry name" value="TGF-b_propeptide"/>
</dbReference>
<dbReference type="InterPro" id="IPR015615">
    <property type="entry name" value="TGF-beta-rel"/>
</dbReference>
<dbReference type="InterPro" id="IPR017948">
    <property type="entry name" value="TGFb_CS"/>
</dbReference>
<dbReference type="PANTHER" id="PTHR11848:SF310">
    <property type="entry name" value="PROTEIN 60A-RELATED"/>
    <property type="match status" value="1"/>
</dbReference>
<dbReference type="PANTHER" id="PTHR11848">
    <property type="entry name" value="TGF-BETA FAMILY"/>
    <property type="match status" value="1"/>
</dbReference>
<dbReference type="Pfam" id="PF00019">
    <property type="entry name" value="TGF_beta"/>
    <property type="match status" value="1"/>
</dbReference>
<dbReference type="Pfam" id="PF00688">
    <property type="entry name" value="TGFb_propeptide"/>
    <property type="match status" value="1"/>
</dbReference>
<dbReference type="SMART" id="SM00204">
    <property type="entry name" value="TGFB"/>
    <property type="match status" value="1"/>
</dbReference>
<dbReference type="SUPFAM" id="SSF57501">
    <property type="entry name" value="Cystine-knot cytokines"/>
    <property type="match status" value="1"/>
</dbReference>
<dbReference type="PROSITE" id="PS00250">
    <property type="entry name" value="TGF_BETA_1"/>
    <property type="match status" value="1"/>
</dbReference>
<dbReference type="PROSITE" id="PS51362">
    <property type="entry name" value="TGF_BETA_2"/>
    <property type="match status" value="1"/>
</dbReference>
<reference key="1">
    <citation type="journal article" date="1994" name="Genes Dev.">
        <title>The screw gene encodes a ubiquitously expressed member of the TGF-beta family required for specification of dorsal cell fates in the Drosophila embryo.</title>
        <authorList>
            <person name="Arora K."/>
            <person name="Levine M.S."/>
            <person name="O'Connor M.B."/>
        </authorList>
    </citation>
    <scope>NUCLEOTIDE SEQUENCE [MRNA]</scope>
    <scope>FUNCTION</scope>
    <scope>TISSUE SPECIFICITY</scope>
    <scope>DEVELOPMENTAL STAGE</scope>
    <source>
        <strain>Canton-S</strain>
    </source>
</reference>
<reference key="2">
    <citation type="journal article" date="2000" name="Science">
        <title>The genome sequence of Drosophila melanogaster.</title>
        <authorList>
            <person name="Adams M.D."/>
            <person name="Celniker S.E."/>
            <person name="Holt R.A."/>
            <person name="Evans C.A."/>
            <person name="Gocayne J.D."/>
            <person name="Amanatides P.G."/>
            <person name="Scherer S.E."/>
            <person name="Li P.W."/>
            <person name="Hoskins R.A."/>
            <person name="Galle R.F."/>
            <person name="George R.A."/>
            <person name="Lewis S.E."/>
            <person name="Richards S."/>
            <person name="Ashburner M."/>
            <person name="Henderson S.N."/>
            <person name="Sutton G.G."/>
            <person name="Wortman J.R."/>
            <person name="Yandell M.D."/>
            <person name="Zhang Q."/>
            <person name="Chen L.X."/>
            <person name="Brandon R.C."/>
            <person name="Rogers Y.-H.C."/>
            <person name="Blazej R.G."/>
            <person name="Champe M."/>
            <person name="Pfeiffer B.D."/>
            <person name="Wan K.H."/>
            <person name="Doyle C."/>
            <person name="Baxter E.G."/>
            <person name="Helt G."/>
            <person name="Nelson C.R."/>
            <person name="Miklos G.L.G."/>
            <person name="Abril J.F."/>
            <person name="Agbayani A."/>
            <person name="An H.-J."/>
            <person name="Andrews-Pfannkoch C."/>
            <person name="Baldwin D."/>
            <person name="Ballew R.M."/>
            <person name="Basu A."/>
            <person name="Baxendale J."/>
            <person name="Bayraktaroglu L."/>
            <person name="Beasley E.M."/>
            <person name="Beeson K.Y."/>
            <person name="Benos P.V."/>
            <person name="Berman B.P."/>
            <person name="Bhandari D."/>
            <person name="Bolshakov S."/>
            <person name="Borkova D."/>
            <person name="Botchan M.R."/>
            <person name="Bouck J."/>
            <person name="Brokstein P."/>
            <person name="Brottier P."/>
            <person name="Burtis K.C."/>
            <person name="Busam D.A."/>
            <person name="Butler H."/>
            <person name="Cadieu E."/>
            <person name="Center A."/>
            <person name="Chandra I."/>
            <person name="Cherry J.M."/>
            <person name="Cawley S."/>
            <person name="Dahlke C."/>
            <person name="Davenport L.B."/>
            <person name="Davies P."/>
            <person name="de Pablos B."/>
            <person name="Delcher A."/>
            <person name="Deng Z."/>
            <person name="Mays A.D."/>
            <person name="Dew I."/>
            <person name="Dietz S.M."/>
            <person name="Dodson K."/>
            <person name="Doup L.E."/>
            <person name="Downes M."/>
            <person name="Dugan-Rocha S."/>
            <person name="Dunkov B.C."/>
            <person name="Dunn P."/>
            <person name="Durbin K.J."/>
            <person name="Evangelista C.C."/>
            <person name="Ferraz C."/>
            <person name="Ferriera S."/>
            <person name="Fleischmann W."/>
            <person name="Fosler C."/>
            <person name="Gabrielian A.E."/>
            <person name="Garg N.S."/>
            <person name="Gelbart W.M."/>
            <person name="Glasser K."/>
            <person name="Glodek A."/>
            <person name="Gong F."/>
            <person name="Gorrell J.H."/>
            <person name="Gu Z."/>
            <person name="Guan P."/>
            <person name="Harris M."/>
            <person name="Harris N.L."/>
            <person name="Harvey D.A."/>
            <person name="Heiman T.J."/>
            <person name="Hernandez J.R."/>
            <person name="Houck J."/>
            <person name="Hostin D."/>
            <person name="Houston K.A."/>
            <person name="Howland T.J."/>
            <person name="Wei M.-H."/>
            <person name="Ibegwam C."/>
            <person name="Jalali M."/>
            <person name="Kalush F."/>
            <person name="Karpen G.H."/>
            <person name="Ke Z."/>
            <person name="Kennison J.A."/>
            <person name="Ketchum K.A."/>
            <person name="Kimmel B.E."/>
            <person name="Kodira C.D."/>
            <person name="Kraft C.L."/>
            <person name="Kravitz S."/>
            <person name="Kulp D."/>
            <person name="Lai Z."/>
            <person name="Lasko P."/>
            <person name="Lei Y."/>
            <person name="Levitsky A.A."/>
            <person name="Li J.H."/>
            <person name="Li Z."/>
            <person name="Liang Y."/>
            <person name="Lin X."/>
            <person name="Liu X."/>
            <person name="Mattei B."/>
            <person name="McIntosh T.C."/>
            <person name="McLeod M.P."/>
            <person name="McPherson D."/>
            <person name="Merkulov G."/>
            <person name="Milshina N.V."/>
            <person name="Mobarry C."/>
            <person name="Morris J."/>
            <person name="Moshrefi A."/>
            <person name="Mount S.M."/>
            <person name="Moy M."/>
            <person name="Murphy B."/>
            <person name="Murphy L."/>
            <person name="Muzny D.M."/>
            <person name="Nelson D.L."/>
            <person name="Nelson D.R."/>
            <person name="Nelson K.A."/>
            <person name="Nixon K."/>
            <person name="Nusskern D.R."/>
            <person name="Pacleb J.M."/>
            <person name="Palazzolo M."/>
            <person name="Pittman G.S."/>
            <person name="Pan S."/>
            <person name="Pollard J."/>
            <person name="Puri V."/>
            <person name="Reese M.G."/>
            <person name="Reinert K."/>
            <person name="Remington K."/>
            <person name="Saunders R.D.C."/>
            <person name="Scheeler F."/>
            <person name="Shen H."/>
            <person name="Shue B.C."/>
            <person name="Siden-Kiamos I."/>
            <person name="Simpson M."/>
            <person name="Skupski M.P."/>
            <person name="Smith T.J."/>
            <person name="Spier E."/>
            <person name="Spradling A.C."/>
            <person name="Stapleton M."/>
            <person name="Strong R."/>
            <person name="Sun E."/>
            <person name="Svirskas R."/>
            <person name="Tector C."/>
            <person name="Turner R."/>
            <person name="Venter E."/>
            <person name="Wang A.H."/>
            <person name="Wang X."/>
            <person name="Wang Z.-Y."/>
            <person name="Wassarman D.A."/>
            <person name="Weinstock G.M."/>
            <person name="Weissenbach J."/>
            <person name="Williams S.M."/>
            <person name="Woodage T."/>
            <person name="Worley K.C."/>
            <person name="Wu D."/>
            <person name="Yang S."/>
            <person name="Yao Q.A."/>
            <person name="Ye J."/>
            <person name="Yeh R.-F."/>
            <person name="Zaveri J.S."/>
            <person name="Zhan M."/>
            <person name="Zhang G."/>
            <person name="Zhao Q."/>
            <person name="Zheng L."/>
            <person name="Zheng X.H."/>
            <person name="Zhong F.N."/>
            <person name="Zhong W."/>
            <person name="Zhou X."/>
            <person name="Zhu S.C."/>
            <person name="Zhu X."/>
            <person name="Smith H.O."/>
            <person name="Gibbs R.A."/>
            <person name="Myers E.W."/>
            <person name="Rubin G.M."/>
            <person name="Venter J.C."/>
        </authorList>
    </citation>
    <scope>NUCLEOTIDE SEQUENCE [LARGE SCALE GENOMIC DNA]</scope>
    <source>
        <strain>Berkeley</strain>
    </source>
</reference>
<reference key="3">
    <citation type="journal article" date="2002" name="Genome Biol.">
        <title>Annotation of the Drosophila melanogaster euchromatic genome: a systematic review.</title>
        <authorList>
            <person name="Misra S."/>
            <person name="Crosby M.A."/>
            <person name="Mungall C.J."/>
            <person name="Matthews B.B."/>
            <person name="Campbell K.S."/>
            <person name="Hradecky P."/>
            <person name="Huang Y."/>
            <person name="Kaminker J.S."/>
            <person name="Millburn G.H."/>
            <person name="Prochnik S.E."/>
            <person name="Smith C.D."/>
            <person name="Tupy J.L."/>
            <person name="Whitfield E.J."/>
            <person name="Bayraktaroglu L."/>
            <person name="Berman B.P."/>
            <person name="Bettencourt B.R."/>
            <person name="Celniker S.E."/>
            <person name="de Grey A.D.N.J."/>
            <person name="Drysdale R.A."/>
            <person name="Harris N.L."/>
            <person name="Richter J."/>
            <person name="Russo S."/>
            <person name="Schroeder A.J."/>
            <person name="Shu S.Q."/>
            <person name="Stapleton M."/>
            <person name="Yamada C."/>
            <person name="Ashburner M."/>
            <person name="Gelbart W.M."/>
            <person name="Rubin G.M."/>
            <person name="Lewis S.E."/>
        </authorList>
    </citation>
    <scope>GENOME REANNOTATION</scope>
    <source>
        <strain>Berkeley</strain>
    </source>
</reference>
<reference key="4">
    <citation type="journal article" date="2002" name="Genome Biol.">
        <title>A Drosophila full-length cDNA resource.</title>
        <authorList>
            <person name="Stapleton M."/>
            <person name="Carlson J.W."/>
            <person name="Brokstein P."/>
            <person name="Yu C."/>
            <person name="Champe M."/>
            <person name="George R.A."/>
            <person name="Guarin H."/>
            <person name="Kronmiller B."/>
            <person name="Pacleb J.M."/>
            <person name="Park S."/>
            <person name="Wan K.H."/>
            <person name="Rubin G.M."/>
            <person name="Celniker S.E."/>
        </authorList>
    </citation>
    <scope>NUCLEOTIDE SEQUENCE [LARGE SCALE MRNA]</scope>
    <source>
        <strain>Berkeley</strain>
        <tissue>Embryo</tissue>
    </source>
</reference>
<accession>P54631</accession>
<accession>Q8INV8</accession>
<organism>
    <name type="scientific">Drosophila melanogaster</name>
    <name type="common">Fruit fly</name>
    <dbReference type="NCBI Taxonomy" id="7227"/>
    <lineage>
        <taxon>Eukaryota</taxon>
        <taxon>Metazoa</taxon>
        <taxon>Ecdysozoa</taxon>
        <taxon>Arthropoda</taxon>
        <taxon>Hexapoda</taxon>
        <taxon>Insecta</taxon>
        <taxon>Pterygota</taxon>
        <taxon>Neoptera</taxon>
        <taxon>Endopterygota</taxon>
        <taxon>Diptera</taxon>
        <taxon>Brachycera</taxon>
        <taxon>Muscomorpha</taxon>
        <taxon>Ephydroidea</taxon>
        <taxon>Drosophilidae</taxon>
        <taxon>Drosophila</taxon>
        <taxon>Sophophora</taxon>
    </lineage>
</organism>
<protein>
    <recommendedName>
        <fullName>Protein screw</fullName>
    </recommendedName>
</protein>
<proteinExistence type="evidence at transcript level"/>
<evidence type="ECO:0000250" key="1"/>
<evidence type="ECO:0000255" key="2"/>
<evidence type="ECO:0000269" key="3">
    <source>
    </source>
</evidence>
<evidence type="ECO:0000305" key="4"/>
<keyword id="KW-0165">Cleavage on pair of basic residues</keyword>
<keyword id="KW-0217">Developmental protein</keyword>
<keyword id="KW-0221">Differentiation</keyword>
<keyword id="KW-1015">Disulfide bond</keyword>
<keyword id="KW-0325">Glycoprotein</keyword>
<keyword id="KW-0339">Growth factor</keyword>
<keyword id="KW-1185">Reference proteome</keyword>
<keyword id="KW-0964">Secreted</keyword>
<keyword id="KW-0732">Signal</keyword>
<name>SCW_DROME</name>